<accession>P55059</accession>
<dbReference type="EC" id="5.3.4.1"/>
<dbReference type="EMBL" id="S74296">
    <property type="protein sequence ID" value="AAC60578.1"/>
    <property type="molecule type" value="mRNA"/>
</dbReference>
<dbReference type="PIR" id="JC2291">
    <property type="entry name" value="JC2291"/>
</dbReference>
<dbReference type="PDB" id="2DJJ">
    <property type="method" value="NMR"/>
    <property type="chains" value="A=354-469"/>
</dbReference>
<dbReference type="PDB" id="2DJK">
    <property type="method" value="NMR"/>
    <property type="chains" value="A=228-355"/>
</dbReference>
<dbReference type="PDB" id="2KP1">
    <property type="method" value="NMR"/>
    <property type="chains" value="A=354-469"/>
</dbReference>
<dbReference type="PDB" id="2KP2">
    <property type="method" value="NMR"/>
    <property type="chains" value="A=228-355"/>
</dbReference>
<dbReference type="PDB" id="2RUE">
    <property type="method" value="NMR"/>
    <property type="chains" value="A=354-469"/>
</dbReference>
<dbReference type="PDB" id="2RUF">
    <property type="method" value="NMR"/>
    <property type="chains" value="A=354-469"/>
</dbReference>
<dbReference type="PDB" id="3WT1">
    <property type="method" value="X-ray"/>
    <property type="resolution" value="1.85 A"/>
    <property type="chains" value="A/B/C/D=228-469"/>
</dbReference>
<dbReference type="PDB" id="3WT2">
    <property type="method" value="X-ray"/>
    <property type="resolution" value="3.30 A"/>
    <property type="chains" value="A/B/C=228-469"/>
</dbReference>
<dbReference type="PDB" id="5CRW">
    <property type="method" value="X-ray"/>
    <property type="resolution" value="1.60 A"/>
    <property type="chains" value="A=228-469"/>
</dbReference>
<dbReference type="PDBsum" id="2DJJ"/>
<dbReference type="PDBsum" id="2DJK"/>
<dbReference type="PDBsum" id="2KP1"/>
<dbReference type="PDBsum" id="2KP2"/>
<dbReference type="PDBsum" id="2RUE"/>
<dbReference type="PDBsum" id="2RUF"/>
<dbReference type="PDBsum" id="3WT1"/>
<dbReference type="PDBsum" id="3WT2"/>
<dbReference type="PDBsum" id="5CRW"/>
<dbReference type="BMRB" id="P55059"/>
<dbReference type="SMR" id="P55059"/>
<dbReference type="BRENDA" id="5.3.4.1">
    <property type="organism ID" value="2710"/>
</dbReference>
<dbReference type="EvolutionaryTrace" id="P55059"/>
<dbReference type="GO" id="GO:0005788">
    <property type="term" value="C:endoplasmic reticulum lumen"/>
    <property type="evidence" value="ECO:0007669"/>
    <property type="project" value="UniProtKB-SubCell"/>
</dbReference>
<dbReference type="GO" id="GO:0003756">
    <property type="term" value="F:protein disulfide isomerase activity"/>
    <property type="evidence" value="ECO:0007669"/>
    <property type="project" value="UniProtKB-EC"/>
</dbReference>
<dbReference type="GO" id="GO:0006457">
    <property type="term" value="P:protein folding"/>
    <property type="evidence" value="ECO:0007669"/>
    <property type="project" value="TreeGrafter"/>
</dbReference>
<dbReference type="GO" id="GO:0034976">
    <property type="term" value="P:response to endoplasmic reticulum stress"/>
    <property type="evidence" value="ECO:0007669"/>
    <property type="project" value="TreeGrafter"/>
</dbReference>
<dbReference type="CDD" id="cd02961">
    <property type="entry name" value="PDI_a_family"/>
    <property type="match status" value="1"/>
</dbReference>
<dbReference type="CDD" id="cd02995">
    <property type="entry name" value="PDI_a_PDI_a'_C"/>
    <property type="match status" value="1"/>
</dbReference>
<dbReference type="CDD" id="cd02982">
    <property type="entry name" value="PDI_b'_family"/>
    <property type="match status" value="1"/>
</dbReference>
<dbReference type="CDD" id="cd02981">
    <property type="entry name" value="PDI_b_family"/>
    <property type="match status" value="1"/>
</dbReference>
<dbReference type="FunFam" id="3.40.30.10:FF:000139">
    <property type="entry name" value="Protein disulfide-isomerase"/>
    <property type="match status" value="1"/>
</dbReference>
<dbReference type="FunFam" id="3.40.30.10:FF:000154">
    <property type="entry name" value="Protein disulfide-isomerase"/>
    <property type="match status" value="1"/>
</dbReference>
<dbReference type="FunFam" id="3.40.30.10:FF:000185">
    <property type="entry name" value="Protein disulfide-isomerase"/>
    <property type="match status" value="1"/>
</dbReference>
<dbReference type="FunFam" id="3.40.30.10:FF:000017">
    <property type="entry name" value="Protein disulfide-isomerase A4"/>
    <property type="match status" value="1"/>
</dbReference>
<dbReference type="Gene3D" id="3.40.30.10">
    <property type="entry name" value="Glutaredoxin"/>
    <property type="match status" value="4"/>
</dbReference>
<dbReference type="IDEAL" id="IID50214"/>
<dbReference type="InterPro" id="IPR005788">
    <property type="entry name" value="PDI_thioredoxin-like_dom"/>
</dbReference>
<dbReference type="InterPro" id="IPR005792">
    <property type="entry name" value="Prot_disulphide_isomerase"/>
</dbReference>
<dbReference type="InterPro" id="IPR036249">
    <property type="entry name" value="Thioredoxin-like_sf"/>
</dbReference>
<dbReference type="InterPro" id="IPR017937">
    <property type="entry name" value="Thioredoxin_CS"/>
</dbReference>
<dbReference type="InterPro" id="IPR013766">
    <property type="entry name" value="Thioredoxin_domain"/>
</dbReference>
<dbReference type="NCBIfam" id="TIGR01130">
    <property type="entry name" value="ER_PDI_fam"/>
    <property type="match status" value="1"/>
</dbReference>
<dbReference type="NCBIfam" id="TIGR01126">
    <property type="entry name" value="pdi_dom"/>
    <property type="match status" value="2"/>
</dbReference>
<dbReference type="PANTHER" id="PTHR18929">
    <property type="entry name" value="PROTEIN DISULFIDE ISOMERASE"/>
    <property type="match status" value="1"/>
</dbReference>
<dbReference type="PANTHER" id="PTHR18929:SF132">
    <property type="entry name" value="PROTEIN DISULFIDE-ISOMERASE A3"/>
    <property type="match status" value="1"/>
</dbReference>
<dbReference type="Pfam" id="PF00085">
    <property type="entry name" value="Thioredoxin"/>
    <property type="match status" value="2"/>
</dbReference>
<dbReference type="Pfam" id="PF13848">
    <property type="entry name" value="Thioredoxin_6"/>
    <property type="match status" value="1"/>
</dbReference>
<dbReference type="PRINTS" id="PR00421">
    <property type="entry name" value="THIOREDOXIN"/>
</dbReference>
<dbReference type="SUPFAM" id="SSF52833">
    <property type="entry name" value="Thioredoxin-like"/>
    <property type="match status" value="4"/>
</dbReference>
<dbReference type="PROSITE" id="PS00014">
    <property type="entry name" value="ER_TARGET"/>
    <property type="match status" value="1"/>
</dbReference>
<dbReference type="PROSITE" id="PS00194">
    <property type="entry name" value="THIOREDOXIN_1"/>
    <property type="match status" value="2"/>
</dbReference>
<dbReference type="PROSITE" id="PS51352">
    <property type="entry name" value="THIOREDOXIN_2"/>
    <property type="match status" value="2"/>
</dbReference>
<keyword id="KW-0002">3D-structure</keyword>
<keyword id="KW-1015">Disulfide bond</keyword>
<keyword id="KW-0256">Endoplasmic reticulum</keyword>
<keyword id="KW-0413">Isomerase</keyword>
<keyword id="KW-0676">Redox-active center</keyword>
<keyword id="KW-0677">Repeat</keyword>
<keyword id="KW-0732">Signal</keyword>
<protein>
    <recommendedName>
        <fullName>Protein disulfide-isomerase</fullName>
        <shortName>PDI</shortName>
        <ecNumber>5.3.4.1</ecNumber>
    </recommendedName>
</protein>
<reference key="1">
    <citation type="journal article" date="1994" name="Biosci. Biotechnol. Biochem.">
        <title>Molecular cloning of a fungal cDNA encoding protein disulfide isomerase.</title>
        <authorList>
            <person name="Kajino T."/>
            <person name="Sarai K."/>
            <person name="Imaeda T."/>
            <person name="Idekoba C."/>
            <person name="Asami O."/>
            <person name="Yamada Y."/>
            <person name="Hirai M."/>
            <person name="Udaka S."/>
        </authorList>
    </citation>
    <scope>NUCLEOTIDE SEQUENCE [MRNA]</scope>
    <source>
        <strain>KASI</strain>
    </source>
</reference>
<evidence type="ECO:0000250" key="1"/>
<evidence type="ECO:0000255" key="2"/>
<evidence type="ECO:0000255" key="3">
    <source>
        <dbReference type="PROSITE-ProRule" id="PRU00691"/>
    </source>
</evidence>
<evidence type="ECO:0000255" key="4">
    <source>
        <dbReference type="PROSITE-ProRule" id="PRU10138"/>
    </source>
</evidence>
<evidence type="ECO:0000256" key="5">
    <source>
        <dbReference type="SAM" id="MobiDB-lite"/>
    </source>
</evidence>
<evidence type="ECO:0000305" key="6"/>
<evidence type="ECO:0007829" key="7">
    <source>
        <dbReference type="PDB" id="2KP1"/>
    </source>
</evidence>
<evidence type="ECO:0007829" key="8">
    <source>
        <dbReference type="PDB" id="2RUE"/>
    </source>
</evidence>
<evidence type="ECO:0007829" key="9">
    <source>
        <dbReference type="PDB" id="3WT2"/>
    </source>
</evidence>
<evidence type="ECO:0007829" key="10">
    <source>
        <dbReference type="PDB" id="5CRW"/>
    </source>
</evidence>
<feature type="signal peptide" evidence="2">
    <location>
        <begin position="1"/>
        <end position="20"/>
    </location>
</feature>
<feature type="chain" id="PRO_0000034215" description="Protein disulfide-isomerase">
    <location>
        <begin position="21"/>
        <end position="505"/>
    </location>
</feature>
<feature type="domain" description="Thioredoxin 1" evidence="3">
    <location>
        <begin position="21"/>
        <end position="128"/>
    </location>
</feature>
<feature type="domain" description="Thioredoxin 2" evidence="3">
    <location>
        <begin position="335"/>
        <end position="465"/>
    </location>
</feature>
<feature type="region of interest" description="Disordered" evidence="5">
    <location>
        <begin position="470"/>
        <end position="505"/>
    </location>
</feature>
<feature type="short sequence motif" description="Prevents secretion from ER" evidence="4">
    <location>
        <begin position="502"/>
        <end position="505"/>
    </location>
</feature>
<feature type="compositionally biased region" description="Low complexity" evidence="5">
    <location>
        <begin position="477"/>
        <end position="488"/>
    </location>
</feature>
<feature type="compositionally biased region" description="Basic and acidic residues" evidence="5">
    <location>
        <begin position="489"/>
        <end position="505"/>
    </location>
</feature>
<feature type="active site" description="Nucleophile" evidence="1">
    <location>
        <position position="50"/>
    </location>
</feature>
<feature type="active site" description="Nucleophile" evidence="1">
    <location>
        <position position="53"/>
    </location>
</feature>
<feature type="active site" description="Nucleophile" evidence="1">
    <location>
        <position position="385"/>
    </location>
</feature>
<feature type="active site" description="Nucleophile" evidence="1">
    <location>
        <position position="388"/>
    </location>
</feature>
<feature type="site" description="Contributes to redox potential value" evidence="1">
    <location>
        <position position="51"/>
    </location>
</feature>
<feature type="site" description="Contributes to redox potential value" evidence="1">
    <location>
        <position position="52"/>
    </location>
</feature>
<feature type="site" description="Lowers pKa of C-terminal Cys of first active site" evidence="1">
    <location>
        <position position="113"/>
    </location>
</feature>
<feature type="site" description="Contributes to redox potential value" evidence="1">
    <location>
        <position position="386"/>
    </location>
</feature>
<feature type="site" description="Contributes to redox potential value" evidence="1">
    <location>
        <position position="387"/>
    </location>
</feature>
<feature type="site" description="Lowers pKa of C-terminal Cys of second active site" evidence="1">
    <location>
        <position position="451"/>
    </location>
</feature>
<feature type="disulfide bond" description="Redox-active" evidence="3">
    <location>
        <begin position="50"/>
        <end position="53"/>
    </location>
</feature>
<feature type="disulfide bond" description="Redox-active" evidence="3">
    <location>
        <begin position="385"/>
        <end position="388"/>
    </location>
</feature>
<feature type="strand" evidence="10">
    <location>
        <begin position="230"/>
        <end position="232"/>
    </location>
</feature>
<feature type="turn" evidence="10">
    <location>
        <begin position="235"/>
        <end position="237"/>
    </location>
</feature>
<feature type="helix" evidence="10">
    <location>
        <begin position="238"/>
        <end position="243"/>
    </location>
</feature>
<feature type="strand" evidence="10">
    <location>
        <begin position="244"/>
        <end position="246"/>
    </location>
</feature>
<feature type="strand" evidence="10">
    <location>
        <begin position="248"/>
        <end position="255"/>
    </location>
</feature>
<feature type="helix" evidence="10">
    <location>
        <begin position="256"/>
        <end position="272"/>
    </location>
</feature>
<feature type="turn" evidence="10">
    <location>
        <begin position="273"/>
        <end position="276"/>
    </location>
</feature>
<feature type="strand" evidence="10">
    <location>
        <begin position="277"/>
        <end position="283"/>
    </location>
</feature>
<feature type="turn" evidence="10">
    <location>
        <begin position="284"/>
        <end position="287"/>
    </location>
</feature>
<feature type="helix" evidence="10">
    <location>
        <begin position="288"/>
        <end position="294"/>
    </location>
</feature>
<feature type="strand" evidence="10">
    <location>
        <begin position="302"/>
        <end position="308"/>
    </location>
</feature>
<feature type="turn" evidence="10">
    <location>
        <begin position="309"/>
        <end position="312"/>
    </location>
</feature>
<feature type="strand" evidence="10">
    <location>
        <begin position="313"/>
        <end position="316"/>
    </location>
</feature>
<feature type="strand" evidence="9">
    <location>
        <begin position="319"/>
        <end position="321"/>
    </location>
</feature>
<feature type="helix" evidence="10">
    <location>
        <begin position="325"/>
        <end position="337"/>
    </location>
</feature>
<feature type="strand" evidence="10">
    <location>
        <begin position="355"/>
        <end position="360"/>
    </location>
</feature>
<feature type="helix" evidence="10">
    <location>
        <begin position="362"/>
        <end position="369"/>
    </location>
</feature>
<feature type="strand" evidence="10">
    <location>
        <begin position="374"/>
        <end position="381"/>
    </location>
</feature>
<feature type="helix" evidence="10">
    <location>
        <begin position="386"/>
        <end position="403"/>
    </location>
</feature>
<feature type="turn" evidence="10">
    <location>
        <begin position="406"/>
        <end position="410"/>
    </location>
</feature>
<feature type="strand" evidence="10">
    <location>
        <begin position="411"/>
        <end position="417"/>
    </location>
</feature>
<feature type="turn" evidence="10">
    <location>
        <begin position="418"/>
        <end position="420"/>
    </location>
</feature>
<feature type="strand" evidence="10">
    <location>
        <begin position="429"/>
        <end position="436"/>
    </location>
</feature>
<feature type="strand" evidence="8">
    <location>
        <begin position="438"/>
        <end position="440"/>
    </location>
</feature>
<feature type="strand" evidence="7">
    <location>
        <begin position="445"/>
        <end position="448"/>
    </location>
</feature>
<feature type="helix" evidence="10">
    <location>
        <begin position="453"/>
        <end position="463"/>
    </location>
</feature>
<name>PDI_HUMIN</name>
<proteinExistence type="evidence at protein level"/>
<comment type="function">
    <text evidence="1">Participates in the folding of proteins containing disulfide bonds, may be involved in glycosylation, prolyl hydroxylation and triglyceride transfer.</text>
</comment>
<comment type="catalytic activity">
    <reaction>
        <text>Catalyzes the rearrangement of -S-S- bonds in proteins.</text>
        <dbReference type="EC" id="5.3.4.1"/>
    </reaction>
</comment>
<comment type="subcellular location">
    <subcellularLocation>
        <location evidence="4">Endoplasmic reticulum lumen</location>
    </subcellularLocation>
</comment>
<comment type="similarity">
    <text evidence="6">Belongs to the protein disulfide isomerase family.</text>
</comment>
<organism>
    <name type="scientific">Humicola insolens</name>
    <name type="common">Soft-rot fungus</name>
    <dbReference type="NCBI Taxonomy" id="85995"/>
    <lineage>
        <taxon>Eukaryota</taxon>
        <taxon>Fungi</taxon>
        <taxon>Dikarya</taxon>
        <taxon>Ascomycota</taxon>
        <taxon>Pezizomycotina</taxon>
        <taxon>Sordariomycetes</taxon>
        <taxon>Sordariomycetidae</taxon>
        <taxon>Sordariales</taxon>
        <taxon>Chaetomiaceae</taxon>
        <taxon>Mycothermus</taxon>
    </lineage>
</organism>
<sequence>MHKAQKFALGLLAAAAVATASDVVQLKKDTFDDFIKTNDLVLAEFFAPWCGHCKALAPEYEEAATTLKEKNIKLAKVDCTEETDLCQQHGVEGYPTLKVFRGLDNVSPYKGQRKAAAITSYMIKQSLPAVSEVTKDNLEEFKKADKAVLVAYVDASDKASSEVFTQVAEKLRDNYPFGSSSDAALAEAEGVKAPAIVLYKDFDEGKAVFSEKFEVEAIEKFAKTGATPLIGEIGPETYSDYMSAGIPLAYIFAETAEERKELSDKLKPIAEAQRGVINFGTIDAKAFGAHAGNLNLKTDKFPAFAIQEVAKNQKFPFDQEKEITFEAIKAFVDDFVAGKIEPSIKSEPIPEKQEGPVTVVVAKNYNEIVLDDTKDVLIEFYAPWCGHCKALAPKYEELGALYAKSEFKDRVVIAKVDATANDVPDEIQGFPTIKLYPAGAKGQPVTYSGSRTVEDLIKFIAENGKYKAAISEDAEETSSATETTTETATKSEEAAKETATEHDEL</sequence>